<protein>
    <recommendedName>
        <fullName evidence="3">O-acyltransferase pboC</fullName>
        <ecNumber evidence="2">2.3.1.-</ecNumber>
    </recommendedName>
    <alternativeName>
        <fullName evidence="3">Protubonine biosynthesis cluster protein C</fullName>
    </alternativeName>
</protein>
<organism>
    <name type="scientific">Aspergillus ustus</name>
    <dbReference type="NCBI Taxonomy" id="40382"/>
    <lineage>
        <taxon>Eukaryota</taxon>
        <taxon>Fungi</taxon>
        <taxon>Dikarya</taxon>
        <taxon>Ascomycota</taxon>
        <taxon>Pezizomycotina</taxon>
        <taxon>Eurotiomycetes</taxon>
        <taxon>Eurotiomycetidae</taxon>
        <taxon>Eurotiales</taxon>
        <taxon>Aspergillaceae</taxon>
        <taxon>Aspergillus</taxon>
        <taxon>Aspergillus subgen. Nidulantes</taxon>
    </lineage>
</organism>
<name>PBOC_ASPUT</name>
<comment type="function">
    <text evidence="2">O-acetyltransferase; part of the gene cluster that mediates the biosynthesis of protubonine B, a hydroxylated and diacetylated cyclo-L-Trp-L-Leu derivative (PubMed:37382166). Within the pathway, pboC catalyzes the acetylation of protubonine D at the hydroxy group to produce protubonine C (PubMed:37382166). The first step of the protubonine B synthesis is performed by the nonribosomal peptide synthetase pboA that catalyzes the formation of cyclo-L-Trp-L-Leu by condensing L-Leu with L-Trp. The flavin-dependent monooxygenase pboD is responsible for hydroxylation at C-3 of the indole ring and subsequent formation of the pyrrolidine ring, leadind to protubonine D. Protubonine D is further diacetylated by two acetyltransferases, pboB and pboC, to form the final product protubonine B via protubonine C (PubMed:37382166).</text>
</comment>
<comment type="pathway">
    <text evidence="2">Secondary metabolite biosynthesis.</text>
</comment>
<comment type="subunit">
    <text evidence="1">Monomer.</text>
</comment>
<comment type="disruption phenotype">
    <text evidence="2">Blocks the production of protubonine B and leads to the accumulation of protubonine D.</text>
</comment>
<comment type="similarity">
    <text evidence="4">Belongs to the plant acyltransferase family.</text>
</comment>
<sequence length="470" mass="53404">MDCVCDETMELILRFDDVIEPEKLRQSLGRLLEIGNWRKLGARVRPRENNAGVKFEYHIPEKYTETRPGFIYRESKYSDGISNHPTASRLPRQHSGLSILGATQDFASLGLQPGDPRHLADWAYTDLPQLFFHHTTFKDATVIAMTYPHSLMDGMGHGTFLRAWIAVLHGREDEVPELGGFEDARSHLTEGAPATKYLLHQYILGWYQTIVFGCWRFIETLWSSEEDRVVCIPRQFVQELRANVLDELDSGKGETFVSNNDVLLAWFARTILSIAGPLRNRSLVLMNSFNIRSVALSSQPAFINNAVIPACTILPIWKVLREPMSFLAMQVRRSLVQQRGLDQIHAWYKLMVSSLEQTGRPRVIGTSDGFTMIFSNWDKASLFRLDLSPAASEMGLPLGQRSTQLGYPSCVLCTTPFSMLGVRSGGCCLGKDAEGNWWTQWRLRRTEWDRLETILETINHQRQTHTGKGV</sequence>
<feature type="chain" id="PRO_0000458983" description="O-acyltransferase pboC">
    <location>
        <begin position="1"/>
        <end position="470"/>
    </location>
</feature>
<feature type="active site" description="Proton acceptor" evidence="1">
    <location>
        <position position="149"/>
    </location>
</feature>
<feature type="active site" description="Proton acceptor" evidence="1">
    <location>
        <position position="386"/>
    </location>
</feature>
<accession>A0A0C1BWC7</accession>
<evidence type="ECO:0000250" key="1">
    <source>
        <dbReference type="UniProtKB" id="Q70PR7"/>
    </source>
</evidence>
<evidence type="ECO:0000269" key="2">
    <source>
    </source>
</evidence>
<evidence type="ECO:0000303" key="3">
    <source>
    </source>
</evidence>
<evidence type="ECO:0000305" key="4"/>
<keyword id="KW-0012">Acyltransferase</keyword>
<keyword id="KW-1185">Reference proteome</keyword>
<keyword id="KW-0808">Transferase</keyword>
<dbReference type="EC" id="2.3.1.-" evidence="2"/>
<dbReference type="EMBL" id="JOMC01000033">
    <property type="protein sequence ID" value="KIA75846.1"/>
    <property type="molecule type" value="Genomic_DNA"/>
</dbReference>
<dbReference type="SMR" id="A0A0C1BWC7"/>
<dbReference type="Proteomes" id="UP000053475">
    <property type="component" value="Unassembled WGS sequence"/>
</dbReference>
<dbReference type="GO" id="GO:0016746">
    <property type="term" value="F:acyltransferase activity"/>
    <property type="evidence" value="ECO:0007669"/>
    <property type="project" value="UniProtKB-KW"/>
</dbReference>
<dbReference type="Gene3D" id="3.30.559.10">
    <property type="entry name" value="Chloramphenicol acetyltransferase-like domain"/>
    <property type="match status" value="2"/>
</dbReference>
<dbReference type="InterPro" id="IPR023213">
    <property type="entry name" value="CAT-like_dom_sf"/>
</dbReference>
<gene>
    <name evidence="3" type="primary">pboC</name>
    <name type="ORF">HK57_00373</name>
</gene>
<proteinExistence type="evidence at protein level"/>
<reference key="1">
    <citation type="journal article" date="2015" name="PLoS ONE">
        <title>A genomics based discovery of secondary metabolite biosynthetic gene clusters in Aspergillus ustus.</title>
        <authorList>
            <person name="Pi B."/>
            <person name="Yu D."/>
            <person name="Dai F."/>
            <person name="Song X."/>
            <person name="Zhu C."/>
            <person name="Li H."/>
            <person name="Yu Y."/>
        </authorList>
    </citation>
    <scope>NUCLEOTIDE SEQUENCE [LARGE SCALE GENOMIC DNA]</scope>
    <source>
        <strain>3.3904</strain>
    </source>
</reference>
<reference key="2">
    <citation type="journal article" date="2023" name="J. Nat. Prod.">
        <title>A flavin-dependent oxygenase catalyzes hydroxylation and simultaneous pyrrolidine ring formation in protubonine biosynthesis in Aspergillus ustus.</title>
        <authorList>
            <person name="Janzen D.J."/>
            <person name="Wang H."/>
            <person name="Li S.M."/>
        </authorList>
    </citation>
    <scope>FUNCTION</scope>
    <scope>DISRUPTION PHENOTYPE</scope>
    <scope>CATALYTIC ACTIVITY</scope>
    <scope>PATHWAY</scope>
</reference>